<proteinExistence type="inferred from homology"/>
<dbReference type="EC" id="3.1.2.6" evidence="1"/>
<dbReference type="EMBL" id="CP000111">
    <property type="protein sequence ID" value="ABB49620.1"/>
    <property type="molecule type" value="Genomic_DNA"/>
</dbReference>
<dbReference type="RefSeq" id="WP_011376115.1">
    <property type="nucleotide sequence ID" value="NC_007577.1"/>
</dbReference>
<dbReference type="SMR" id="Q31BX5"/>
<dbReference type="STRING" id="74546.PMT9312_0559"/>
<dbReference type="KEGG" id="pmi:PMT9312_0559"/>
<dbReference type="eggNOG" id="COG0491">
    <property type="taxonomic scope" value="Bacteria"/>
</dbReference>
<dbReference type="HOGENOM" id="CLU_030571_4_1_3"/>
<dbReference type="OrthoDB" id="9802897at2"/>
<dbReference type="UniPathway" id="UPA00619">
    <property type="reaction ID" value="UER00676"/>
</dbReference>
<dbReference type="Proteomes" id="UP000002715">
    <property type="component" value="Chromosome"/>
</dbReference>
<dbReference type="GO" id="GO:0004416">
    <property type="term" value="F:hydroxyacylglutathione hydrolase activity"/>
    <property type="evidence" value="ECO:0007669"/>
    <property type="project" value="UniProtKB-UniRule"/>
</dbReference>
<dbReference type="GO" id="GO:0046872">
    <property type="term" value="F:metal ion binding"/>
    <property type="evidence" value="ECO:0007669"/>
    <property type="project" value="UniProtKB-KW"/>
</dbReference>
<dbReference type="GO" id="GO:0019243">
    <property type="term" value="P:methylglyoxal catabolic process to D-lactate via S-lactoyl-glutathione"/>
    <property type="evidence" value="ECO:0007669"/>
    <property type="project" value="InterPro"/>
</dbReference>
<dbReference type="CDD" id="cd07723">
    <property type="entry name" value="hydroxyacylglutathione_hydrolase_MBL-fold"/>
    <property type="match status" value="1"/>
</dbReference>
<dbReference type="Gene3D" id="3.60.15.10">
    <property type="entry name" value="Ribonuclease Z/Hydroxyacylglutathione hydrolase-like"/>
    <property type="match status" value="1"/>
</dbReference>
<dbReference type="HAMAP" id="MF_01374">
    <property type="entry name" value="Glyoxalase_2"/>
    <property type="match status" value="1"/>
</dbReference>
<dbReference type="InterPro" id="IPR035680">
    <property type="entry name" value="Clx_II_MBL"/>
</dbReference>
<dbReference type="InterPro" id="IPR050110">
    <property type="entry name" value="Glyoxalase_II_hydrolase"/>
</dbReference>
<dbReference type="InterPro" id="IPR032282">
    <property type="entry name" value="HAGH_C"/>
</dbReference>
<dbReference type="InterPro" id="IPR017782">
    <property type="entry name" value="Hydroxyacylglutathione_Hdrlase"/>
</dbReference>
<dbReference type="InterPro" id="IPR001279">
    <property type="entry name" value="Metallo-B-lactamas"/>
</dbReference>
<dbReference type="InterPro" id="IPR036866">
    <property type="entry name" value="RibonucZ/Hydroxyglut_hydro"/>
</dbReference>
<dbReference type="NCBIfam" id="TIGR03413">
    <property type="entry name" value="GSH_gloB"/>
    <property type="match status" value="1"/>
</dbReference>
<dbReference type="PANTHER" id="PTHR43705">
    <property type="entry name" value="HYDROXYACYLGLUTATHIONE HYDROLASE"/>
    <property type="match status" value="1"/>
</dbReference>
<dbReference type="PANTHER" id="PTHR43705:SF1">
    <property type="entry name" value="HYDROXYACYLGLUTATHIONE HYDROLASE GLOB"/>
    <property type="match status" value="1"/>
</dbReference>
<dbReference type="Pfam" id="PF16123">
    <property type="entry name" value="HAGH_C"/>
    <property type="match status" value="1"/>
</dbReference>
<dbReference type="Pfam" id="PF00753">
    <property type="entry name" value="Lactamase_B"/>
    <property type="match status" value="1"/>
</dbReference>
<dbReference type="PIRSF" id="PIRSF005457">
    <property type="entry name" value="Glx"/>
    <property type="match status" value="1"/>
</dbReference>
<dbReference type="SMART" id="SM00849">
    <property type="entry name" value="Lactamase_B"/>
    <property type="match status" value="1"/>
</dbReference>
<dbReference type="SUPFAM" id="SSF56281">
    <property type="entry name" value="Metallo-hydrolase/oxidoreductase"/>
    <property type="match status" value="1"/>
</dbReference>
<feature type="chain" id="PRO_0000309679" description="Hydroxyacylglutathione hydrolase">
    <location>
        <begin position="1"/>
        <end position="246"/>
    </location>
</feature>
<feature type="binding site" evidence="1">
    <location>
        <position position="58"/>
    </location>
    <ligand>
        <name>Zn(2+)</name>
        <dbReference type="ChEBI" id="CHEBI:29105"/>
        <label>1</label>
    </ligand>
</feature>
<feature type="binding site" evidence="1">
    <location>
        <position position="60"/>
    </location>
    <ligand>
        <name>Zn(2+)</name>
        <dbReference type="ChEBI" id="CHEBI:29105"/>
        <label>1</label>
    </ligand>
</feature>
<feature type="binding site" evidence="1">
    <location>
        <position position="62"/>
    </location>
    <ligand>
        <name>Zn(2+)</name>
        <dbReference type="ChEBI" id="CHEBI:29105"/>
        <label>2</label>
    </ligand>
</feature>
<feature type="binding site" evidence="1">
    <location>
        <position position="63"/>
    </location>
    <ligand>
        <name>Zn(2+)</name>
        <dbReference type="ChEBI" id="CHEBI:29105"/>
        <label>2</label>
    </ligand>
</feature>
<feature type="binding site" evidence="1">
    <location>
        <position position="117"/>
    </location>
    <ligand>
        <name>Zn(2+)</name>
        <dbReference type="ChEBI" id="CHEBI:29105"/>
        <label>1</label>
    </ligand>
</feature>
<feature type="binding site" evidence="1">
    <location>
        <position position="137"/>
    </location>
    <ligand>
        <name>Zn(2+)</name>
        <dbReference type="ChEBI" id="CHEBI:29105"/>
        <label>1</label>
    </ligand>
</feature>
<feature type="binding site" evidence="1">
    <location>
        <position position="137"/>
    </location>
    <ligand>
        <name>Zn(2+)</name>
        <dbReference type="ChEBI" id="CHEBI:29105"/>
        <label>2</label>
    </ligand>
</feature>
<feature type="binding site" evidence="1">
    <location>
        <position position="175"/>
    </location>
    <ligand>
        <name>Zn(2+)</name>
        <dbReference type="ChEBI" id="CHEBI:29105"/>
        <label>2</label>
    </ligand>
</feature>
<gene>
    <name evidence="1" type="primary">gloB</name>
    <name type="ordered locus">PMT9312_0559</name>
</gene>
<accession>Q31BX5</accession>
<comment type="function">
    <text evidence="1">Thiolesterase that catalyzes the hydrolysis of S-D-lactoyl-glutathione to form glutathione and D-lactic acid.</text>
</comment>
<comment type="catalytic activity">
    <reaction evidence="1">
        <text>an S-(2-hydroxyacyl)glutathione + H2O = a 2-hydroxy carboxylate + glutathione + H(+)</text>
        <dbReference type="Rhea" id="RHEA:21864"/>
        <dbReference type="ChEBI" id="CHEBI:15377"/>
        <dbReference type="ChEBI" id="CHEBI:15378"/>
        <dbReference type="ChEBI" id="CHEBI:57925"/>
        <dbReference type="ChEBI" id="CHEBI:58896"/>
        <dbReference type="ChEBI" id="CHEBI:71261"/>
        <dbReference type="EC" id="3.1.2.6"/>
    </reaction>
</comment>
<comment type="cofactor">
    <cofactor evidence="1">
        <name>Zn(2+)</name>
        <dbReference type="ChEBI" id="CHEBI:29105"/>
    </cofactor>
    <text evidence="1">Binds 2 Zn(2+) ions per subunit.</text>
</comment>
<comment type="pathway">
    <text evidence="1">Secondary metabolite metabolism; methylglyoxal degradation; (R)-lactate from methylglyoxal: step 2/2.</text>
</comment>
<comment type="subunit">
    <text evidence="1">Monomer.</text>
</comment>
<comment type="similarity">
    <text evidence="1">Belongs to the metallo-beta-lactamase superfamily. Glyoxalase II family.</text>
</comment>
<keyword id="KW-0378">Hydrolase</keyword>
<keyword id="KW-0479">Metal-binding</keyword>
<keyword id="KW-0862">Zinc</keyword>
<name>GLO2_PROM9</name>
<organism>
    <name type="scientific">Prochlorococcus marinus (strain MIT 9312)</name>
    <dbReference type="NCBI Taxonomy" id="74546"/>
    <lineage>
        <taxon>Bacteria</taxon>
        <taxon>Bacillati</taxon>
        <taxon>Cyanobacteriota</taxon>
        <taxon>Cyanophyceae</taxon>
        <taxon>Synechococcales</taxon>
        <taxon>Prochlorococcaceae</taxon>
        <taxon>Prochlorococcus</taxon>
    </lineage>
</organism>
<sequence>MEFNKAQNIIGLRVLNDNVIWLWEKDKSVVVIDPAIHEPVIRYIDENNLYIKAILQTHHHSDHIGGTKYLIERWPNVQVIASSKDKKRIPFQNISVEDGETLNILGEEIKIIEVLGHTNSHIAFFVNGESPVLFIGDTLFSGGCGRIFEGTYQQMYSSLERIKSLPKNTLIYCAHEYTKANLLWALNLKPKDQDIKNKLLQVEKKLSINELTIPFLLDEEMKINLFLRAKNLKEFTFLRENKDLWV</sequence>
<reference key="1">
    <citation type="journal article" date="2006" name="Science">
        <title>Genomic islands and the ecology and evolution of Prochlorococcus.</title>
        <authorList>
            <person name="Coleman M.L."/>
            <person name="Sullivan M.B."/>
            <person name="Martiny A.C."/>
            <person name="Steglich C."/>
            <person name="Barry K."/>
            <person name="Delong E.F."/>
            <person name="Chisholm S.W."/>
        </authorList>
    </citation>
    <scope>NUCLEOTIDE SEQUENCE [LARGE SCALE GENOMIC DNA]</scope>
    <source>
        <strain>MIT 9312</strain>
    </source>
</reference>
<evidence type="ECO:0000255" key="1">
    <source>
        <dbReference type="HAMAP-Rule" id="MF_01374"/>
    </source>
</evidence>
<protein>
    <recommendedName>
        <fullName evidence="1">Hydroxyacylglutathione hydrolase</fullName>
        <ecNumber evidence="1">3.1.2.6</ecNumber>
    </recommendedName>
    <alternativeName>
        <fullName evidence="1">Glyoxalase II</fullName>
        <shortName evidence="1">Glx II</shortName>
    </alternativeName>
</protein>